<gene>
    <name type="ordered locus">MmarC6_0247</name>
</gene>
<dbReference type="EMBL" id="CP000867">
    <property type="protein sequence ID" value="ABX01068.1"/>
    <property type="molecule type" value="Genomic_DNA"/>
</dbReference>
<dbReference type="SMR" id="A9A7E4"/>
<dbReference type="STRING" id="444158.MmarC6_0247"/>
<dbReference type="KEGG" id="mmx:MmarC6_0247"/>
<dbReference type="eggNOG" id="arCOG04885">
    <property type="taxonomic scope" value="Archaea"/>
</dbReference>
<dbReference type="HOGENOM" id="CLU_846254_0_0_2"/>
<dbReference type="OrthoDB" id="235676at2157"/>
<dbReference type="PhylomeDB" id="A9A7E4"/>
<dbReference type="HAMAP" id="MF_01087">
    <property type="entry name" value="UPF0285"/>
    <property type="match status" value="1"/>
</dbReference>
<dbReference type="InterPro" id="IPR043129">
    <property type="entry name" value="ATPase_NBD"/>
</dbReference>
<dbReference type="InterPro" id="IPR016735">
    <property type="entry name" value="Methan_mark_12"/>
</dbReference>
<dbReference type="NCBIfam" id="TIGR03281">
    <property type="entry name" value="methan_mark_12"/>
    <property type="match status" value="1"/>
</dbReference>
<dbReference type="PIRSF" id="PIRSF018783">
    <property type="entry name" value="UCP018783"/>
    <property type="match status" value="1"/>
</dbReference>
<dbReference type="SUPFAM" id="SSF53067">
    <property type="entry name" value="Actin-like ATPase domain"/>
    <property type="match status" value="1"/>
</dbReference>
<sequence>MIVVGIDHGTSGITACLMENKTVKSIFKMKRTEINENSFLKELEKHVNLQDIDLMGVCYSMGDGIDKITDINKVENRGVINLEGIGKKVGGGTRVYDEIKSSNIPAIVIPGLHKGVKSMDERFNTLFSHIASPEKISICYNAYKTFGFENFILSDISSNTVTLLIKNGKIFGGFDACVGAVGILHGPLDLELIRNIDSKKITANEAFSKAGVVKVTDSYKGVENTKFEIMSNYKNDKKCKLAVDSLVLSVSMEINSLMFLTPEKNVILAGSIGTWKNPNVSEMIKENIDGNVLVLNGESGAIGSAMIAEDILNGKKEILGISVDF</sequence>
<reference key="1">
    <citation type="submission" date="2007-10" db="EMBL/GenBank/DDBJ databases">
        <title>Complete sequence of Methanococcus maripaludis C6.</title>
        <authorList>
            <consortium name="US DOE Joint Genome Institute"/>
            <person name="Copeland A."/>
            <person name="Lucas S."/>
            <person name="Lapidus A."/>
            <person name="Barry K."/>
            <person name="Glavina del Rio T."/>
            <person name="Dalin E."/>
            <person name="Tice H."/>
            <person name="Pitluck S."/>
            <person name="Clum A."/>
            <person name="Schmutz J."/>
            <person name="Larimer F."/>
            <person name="Land M."/>
            <person name="Hauser L."/>
            <person name="Kyrpides N."/>
            <person name="Mikhailova N."/>
            <person name="Sieprawska-Lupa M."/>
            <person name="Whitman W.B."/>
            <person name="Richardson P."/>
        </authorList>
    </citation>
    <scope>NUCLEOTIDE SEQUENCE [LARGE SCALE GENOMIC DNA]</scope>
    <source>
        <strain>C6 / ATCC BAA-1332</strain>
    </source>
</reference>
<accession>A9A7E4</accession>
<name>Y247_METM6</name>
<feature type="chain" id="PRO_1000149872" description="UPF0285 protein MmarC6_0247">
    <location>
        <begin position="1"/>
        <end position="325"/>
    </location>
</feature>
<organism>
    <name type="scientific">Methanococcus maripaludis (strain C6 / ATCC BAA-1332)</name>
    <dbReference type="NCBI Taxonomy" id="444158"/>
    <lineage>
        <taxon>Archaea</taxon>
        <taxon>Methanobacteriati</taxon>
        <taxon>Methanobacteriota</taxon>
        <taxon>Methanomada group</taxon>
        <taxon>Methanococci</taxon>
        <taxon>Methanococcales</taxon>
        <taxon>Methanococcaceae</taxon>
        <taxon>Methanococcus</taxon>
    </lineage>
</organism>
<proteinExistence type="inferred from homology"/>
<evidence type="ECO:0000255" key="1">
    <source>
        <dbReference type="HAMAP-Rule" id="MF_01087"/>
    </source>
</evidence>
<protein>
    <recommendedName>
        <fullName evidence="1">UPF0285 protein MmarC6_0247</fullName>
    </recommendedName>
</protein>
<comment type="similarity">
    <text evidence="1">Belongs to the UPF0285 family.</text>
</comment>